<name>PYRDB_CUTAK</name>
<gene>
    <name type="primary">pyrD</name>
    <name type="ordered locus">PPA1002</name>
</gene>
<dbReference type="EC" id="1.3.1.14"/>
<dbReference type="EMBL" id="AE017283">
    <property type="protein sequence ID" value="AAT82754.1"/>
    <property type="molecule type" value="Genomic_DNA"/>
</dbReference>
<dbReference type="RefSeq" id="WP_002517834.1">
    <property type="nucleotide sequence ID" value="NZ_CP025935.1"/>
</dbReference>
<dbReference type="SMR" id="Q6A912"/>
<dbReference type="EnsemblBacteria" id="AAT82754">
    <property type="protein sequence ID" value="AAT82754"/>
    <property type="gene ID" value="PPA1002"/>
</dbReference>
<dbReference type="KEGG" id="pac:PPA1002"/>
<dbReference type="eggNOG" id="COG0167">
    <property type="taxonomic scope" value="Bacteria"/>
</dbReference>
<dbReference type="HOGENOM" id="CLU_042042_0_0_11"/>
<dbReference type="UniPathway" id="UPA00070">
    <property type="reaction ID" value="UER00945"/>
</dbReference>
<dbReference type="Proteomes" id="UP000000603">
    <property type="component" value="Chromosome"/>
</dbReference>
<dbReference type="GO" id="GO:0005737">
    <property type="term" value="C:cytoplasm"/>
    <property type="evidence" value="ECO:0007669"/>
    <property type="project" value="UniProtKB-SubCell"/>
</dbReference>
<dbReference type="GO" id="GO:0004589">
    <property type="term" value="F:dihydroorotate dehydrogenase (NAD+) activity"/>
    <property type="evidence" value="ECO:0007669"/>
    <property type="project" value="UniProtKB-EC"/>
</dbReference>
<dbReference type="GO" id="GO:0006207">
    <property type="term" value="P:'de novo' pyrimidine nucleobase biosynthetic process"/>
    <property type="evidence" value="ECO:0007669"/>
    <property type="project" value="InterPro"/>
</dbReference>
<dbReference type="GO" id="GO:0044205">
    <property type="term" value="P:'de novo' UMP biosynthetic process"/>
    <property type="evidence" value="ECO:0007669"/>
    <property type="project" value="UniProtKB-UniRule"/>
</dbReference>
<dbReference type="CDD" id="cd04740">
    <property type="entry name" value="DHOD_1B_like"/>
    <property type="match status" value="1"/>
</dbReference>
<dbReference type="FunFam" id="3.20.20.70:FF:000069">
    <property type="entry name" value="Dihydroorotate dehydrogenase"/>
    <property type="match status" value="1"/>
</dbReference>
<dbReference type="Gene3D" id="3.20.20.70">
    <property type="entry name" value="Aldolase class I"/>
    <property type="match status" value="1"/>
</dbReference>
<dbReference type="HAMAP" id="MF_00224">
    <property type="entry name" value="DHO_dh_type1"/>
    <property type="match status" value="1"/>
</dbReference>
<dbReference type="InterPro" id="IPR013785">
    <property type="entry name" value="Aldolase_TIM"/>
</dbReference>
<dbReference type="InterPro" id="IPR050074">
    <property type="entry name" value="DHO_dehydrogenase"/>
</dbReference>
<dbReference type="InterPro" id="IPR033888">
    <property type="entry name" value="DHOD_1B"/>
</dbReference>
<dbReference type="InterPro" id="IPR024920">
    <property type="entry name" value="Dihydroorotate_DH_1"/>
</dbReference>
<dbReference type="InterPro" id="IPR012135">
    <property type="entry name" value="Dihydroorotate_DH_1_2"/>
</dbReference>
<dbReference type="InterPro" id="IPR005720">
    <property type="entry name" value="Dihydroorotate_DH_cat"/>
</dbReference>
<dbReference type="InterPro" id="IPR001295">
    <property type="entry name" value="Dihydroorotate_DH_CS"/>
</dbReference>
<dbReference type="InterPro" id="IPR049622">
    <property type="entry name" value="Dihydroorotate_DH_I"/>
</dbReference>
<dbReference type="NCBIfam" id="NF005574">
    <property type="entry name" value="PRK07259.1"/>
    <property type="match status" value="1"/>
</dbReference>
<dbReference type="NCBIfam" id="TIGR01037">
    <property type="entry name" value="pyrD_sub1_fam"/>
    <property type="match status" value="1"/>
</dbReference>
<dbReference type="PANTHER" id="PTHR48109:SF1">
    <property type="entry name" value="DIHYDROOROTATE DEHYDROGENASE (FUMARATE)"/>
    <property type="match status" value="1"/>
</dbReference>
<dbReference type="PANTHER" id="PTHR48109">
    <property type="entry name" value="DIHYDROOROTATE DEHYDROGENASE (QUINONE), MITOCHONDRIAL-RELATED"/>
    <property type="match status" value="1"/>
</dbReference>
<dbReference type="Pfam" id="PF01180">
    <property type="entry name" value="DHO_dh"/>
    <property type="match status" value="1"/>
</dbReference>
<dbReference type="PIRSF" id="PIRSF000164">
    <property type="entry name" value="DHO_oxidase"/>
    <property type="match status" value="1"/>
</dbReference>
<dbReference type="SUPFAM" id="SSF51395">
    <property type="entry name" value="FMN-linked oxidoreductases"/>
    <property type="match status" value="1"/>
</dbReference>
<dbReference type="PROSITE" id="PS00912">
    <property type="entry name" value="DHODEHASE_2"/>
    <property type="match status" value="1"/>
</dbReference>
<feature type="chain" id="PRO_1000024141" description="Dihydroorotate dehydrogenase B (NAD(+)), catalytic subunit">
    <location>
        <begin position="1"/>
        <end position="307"/>
    </location>
</feature>
<feature type="active site" description="Nucleophile">
    <location>
        <position position="132"/>
    </location>
</feature>
<feature type="binding site" evidence="1">
    <location>
        <position position="21"/>
    </location>
    <ligand>
        <name>FMN</name>
        <dbReference type="ChEBI" id="CHEBI:58210"/>
    </ligand>
</feature>
<feature type="binding site" evidence="1">
    <location>
        <begin position="45"/>
        <end position="46"/>
    </location>
    <ligand>
        <name>FMN</name>
        <dbReference type="ChEBI" id="CHEBI:58210"/>
    </ligand>
</feature>
<feature type="binding site" evidence="1">
    <location>
        <position position="45"/>
    </location>
    <ligand>
        <name>substrate</name>
    </ligand>
</feature>
<feature type="binding site" evidence="1">
    <location>
        <begin position="69"/>
        <end position="73"/>
    </location>
    <ligand>
        <name>substrate</name>
    </ligand>
</feature>
<feature type="binding site" evidence="1">
    <location>
        <position position="101"/>
    </location>
    <ligand>
        <name>FMN</name>
        <dbReference type="ChEBI" id="CHEBI:58210"/>
    </ligand>
</feature>
<feature type="binding site" evidence="1">
    <location>
        <position position="129"/>
    </location>
    <ligand>
        <name>FMN</name>
        <dbReference type="ChEBI" id="CHEBI:58210"/>
    </ligand>
</feature>
<feature type="binding site" evidence="1">
    <location>
        <position position="129"/>
    </location>
    <ligand>
        <name>substrate</name>
    </ligand>
</feature>
<feature type="binding site" evidence="1">
    <location>
        <position position="167"/>
    </location>
    <ligand>
        <name>FMN</name>
        <dbReference type="ChEBI" id="CHEBI:58210"/>
    </ligand>
</feature>
<feature type="binding site" evidence="1">
    <location>
        <position position="193"/>
    </location>
    <ligand>
        <name>FMN</name>
        <dbReference type="ChEBI" id="CHEBI:58210"/>
    </ligand>
</feature>
<feature type="binding site" evidence="1">
    <location>
        <begin position="194"/>
        <end position="195"/>
    </location>
    <ligand>
        <name>substrate</name>
    </ligand>
</feature>
<feature type="binding site" evidence="1">
    <location>
        <position position="219"/>
    </location>
    <ligand>
        <name>FMN</name>
        <dbReference type="ChEBI" id="CHEBI:58210"/>
    </ligand>
</feature>
<feature type="binding site" evidence="1">
    <location>
        <begin position="245"/>
        <end position="246"/>
    </location>
    <ligand>
        <name>FMN</name>
        <dbReference type="ChEBI" id="CHEBI:58210"/>
    </ligand>
</feature>
<feature type="binding site" evidence="1">
    <location>
        <begin position="267"/>
        <end position="268"/>
    </location>
    <ligand>
        <name>FMN</name>
        <dbReference type="ChEBI" id="CHEBI:58210"/>
    </ligand>
</feature>
<evidence type="ECO:0000250" key="1"/>
<evidence type="ECO:0000305" key="2"/>
<protein>
    <recommendedName>
        <fullName>Dihydroorotate dehydrogenase B (NAD(+)), catalytic subunit</fullName>
        <shortName>DHOD B</shortName>
        <shortName>DHODase B</shortName>
        <shortName>DHOdehase B</shortName>
        <ecNumber>1.3.1.14</ecNumber>
    </recommendedName>
    <alternativeName>
        <fullName>Dihydroorotate oxidase B</fullName>
    </alternativeName>
    <alternativeName>
        <fullName>Orotate reductase (NADH)</fullName>
    </alternativeName>
</protein>
<organism>
    <name type="scientific">Cutibacterium acnes (strain DSM 16379 / KPA171202)</name>
    <name type="common">Propionibacterium acnes</name>
    <dbReference type="NCBI Taxonomy" id="267747"/>
    <lineage>
        <taxon>Bacteria</taxon>
        <taxon>Bacillati</taxon>
        <taxon>Actinomycetota</taxon>
        <taxon>Actinomycetes</taxon>
        <taxon>Propionibacteriales</taxon>
        <taxon>Propionibacteriaceae</taxon>
        <taxon>Cutibacterium</taxon>
    </lineage>
</organism>
<reference key="1">
    <citation type="journal article" date="2004" name="Science">
        <title>The complete genome sequence of Propionibacterium acnes, a commensal of human skin.</title>
        <authorList>
            <person name="Brueggemann H."/>
            <person name="Henne A."/>
            <person name="Hoster F."/>
            <person name="Liesegang H."/>
            <person name="Wiezer A."/>
            <person name="Strittmatter A."/>
            <person name="Hujer S."/>
            <person name="Duerre P."/>
            <person name="Gottschalk G."/>
        </authorList>
    </citation>
    <scope>NUCLEOTIDE SEQUENCE [LARGE SCALE GENOMIC DNA]</scope>
    <source>
        <strain>DSM 16379 / KPA171202</strain>
    </source>
</reference>
<accession>Q6A912</accession>
<comment type="function">
    <text evidence="1">Catalyzes the conversion of dihydroorotate to orotate with NAD(+) as electron acceptor.</text>
</comment>
<comment type="catalytic activity">
    <reaction>
        <text>(S)-dihydroorotate + NAD(+) = orotate + NADH + H(+)</text>
        <dbReference type="Rhea" id="RHEA:13513"/>
        <dbReference type="ChEBI" id="CHEBI:15378"/>
        <dbReference type="ChEBI" id="CHEBI:30839"/>
        <dbReference type="ChEBI" id="CHEBI:30864"/>
        <dbReference type="ChEBI" id="CHEBI:57540"/>
        <dbReference type="ChEBI" id="CHEBI:57945"/>
        <dbReference type="EC" id="1.3.1.14"/>
    </reaction>
</comment>
<comment type="cofactor">
    <cofactor evidence="1">
        <name>FMN</name>
        <dbReference type="ChEBI" id="CHEBI:58210"/>
    </cofactor>
    <text evidence="1">Binds 1 FMN per subunit.</text>
</comment>
<comment type="pathway">
    <text>Pyrimidine metabolism; UMP biosynthesis via de novo pathway; orotate from (S)-dihydroorotate (NAD(+) route): step 1/1.</text>
</comment>
<comment type="subunit">
    <text evidence="1">Heterotetramer of 2 PyrK and 2 PyrD type B subunits.</text>
</comment>
<comment type="subcellular location">
    <subcellularLocation>
        <location evidence="1">Cytoplasm</location>
    </subcellularLocation>
</comment>
<comment type="similarity">
    <text evidence="2">Belongs to the dihydroorotate dehydrogenase family. Type 1 subfamily.</text>
</comment>
<sequence length="307" mass="31976">MTRLAVSLPGLNLKNPIMPASGCFGFGAEYAEYYDLSVLGSIMVKATTLEPRRGNPVIRVAETPGGMLNAIGLQNPGLDVVMAEKLPWLAEHFPDLPIIANVAGYTTEDYVRVCEVISTAPNVAAVEINISCPNVKRGGITFGTNVTAAHDLTQAVVAAASVPVYVKLSPNVTDITEIARATADAGADGLTLINTLTGMRINLARRTPVIANATGGLSGPAVLPIAVRMIDAVTRVVDIPVIGMGGVMTSADALELMMAGASAVGVGTANFTDPLACPKIINGLEPLMDDLSIASLEDLRTQVRQSR</sequence>
<proteinExistence type="inferred from homology"/>
<keyword id="KW-0963">Cytoplasm</keyword>
<keyword id="KW-0285">Flavoprotein</keyword>
<keyword id="KW-0288">FMN</keyword>
<keyword id="KW-0520">NAD</keyword>
<keyword id="KW-0560">Oxidoreductase</keyword>
<keyword id="KW-0665">Pyrimidine biosynthesis</keyword>